<name>PUF60_RAT</name>
<sequence length="564" mass="60249">MATATIALQVNGQQGGGSEPAAAAAAAAAAVVAAGDKWKPPQGTESIKMENGQSTGTKLGLPPLTPEQQEALQKAKKYAMEQSIKSVLVKQTIAHQQQQLTNLQMAAVTMGFGDPLSPLQSMAAQRQRALAIMCRVYVGSIYYELGEDTIRQAFAPFGPIKSIDMSWDSVTMKHKGFAFVEYEVPEAAQLALEQMNSVMLGGRNIKVGRPSNIGQAQPIIDQLAEEARAFNRIYVASVHQDLSDDDIKSVFEAFGKIKSCTLARDPTTGKHKGYGFIEYEKAQSSQDAVSSMNLFDLGGQYLRVGKAVTPPMPLLTPATPGGLPPAAAVAAAAATAKITAQEAVAGAAVLGTLATPGLVSPALTLAQPLGALPQAVMAAQAPGVITGVTPARPPIPVTIPSVGVVNPILASPPTLGLLEPKKEKEEEELFPESERPEMLSEQEHMSISGSSARHMVMQKLLRKQESTVMVLRNMVDPKDIDDDLEGEVTEECGKFGAVNRVIIYQEKQGEEEDAEIIVKIFVEFSMASETHKAIQALNGRWFGGRKVVAEVYDQERFDNSDLSA</sequence>
<accession>Q9WV25</accession>
<evidence type="ECO:0000250" key="1"/>
<evidence type="ECO:0000250" key="2">
    <source>
        <dbReference type="UniProtKB" id="Q3UEB3"/>
    </source>
</evidence>
<evidence type="ECO:0000250" key="3">
    <source>
        <dbReference type="UniProtKB" id="Q9UHX1"/>
    </source>
</evidence>
<evidence type="ECO:0000255" key="4">
    <source>
        <dbReference type="PROSITE-ProRule" id="PRU00176"/>
    </source>
</evidence>
<evidence type="ECO:0000256" key="5">
    <source>
        <dbReference type="SAM" id="MobiDB-lite"/>
    </source>
</evidence>
<evidence type="ECO:0000303" key="6">
    <source ref="1"/>
</evidence>
<evidence type="ECO:0000305" key="7"/>
<evidence type="ECO:0000312" key="8">
    <source>
        <dbReference type="RGD" id="621674"/>
    </source>
</evidence>
<protein>
    <recommendedName>
        <fullName evidence="8">Poly(U)-binding-splicing factor PUF60</fullName>
    </recommendedName>
    <alternativeName>
        <fullName evidence="8">60 kDa poly(U)-binding-splicing factor</fullName>
    </alternativeName>
    <alternativeName>
        <fullName evidence="3">RNA-binding protein Siah-BP</fullName>
    </alternativeName>
    <alternativeName>
        <fullName evidence="6">Siah-binding protein 1</fullName>
    </alternativeName>
</protein>
<reference key="1">
    <citation type="submission" date="1999-07" db="EMBL/GenBank/DDBJ databases">
        <title>A sequence-specific RNA-binding protein homologous to human SiahBP.</title>
        <authorList>
            <person name="Poleev A."/>
            <person name="Stamm S."/>
        </authorList>
    </citation>
    <scope>NUCLEOTIDE SEQUENCE [MRNA] (ISOFORM 2)</scope>
</reference>
<reference key="2">
    <citation type="journal article" date="2004" name="Nature">
        <title>Genome sequence of the Brown Norway rat yields insights into mammalian evolution.</title>
        <authorList>
            <person name="Gibbs R.A."/>
            <person name="Weinstock G.M."/>
            <person name="Metzker M.L."/>
            <person name="Muzny D.M."/>
            <person name="Sodergren E.J."/>
            <person name="Scherer S."/>
            <person name="Scott G."/>
            <person name="Steffen D."/>
            <person name="Worley K.C."/>
            <person name="Burch P.E."/>
            <person name="Okwuonu G."/>
            <person name="Hines S."/>
            <person name="Lewis L."/>
            <person name="Deramo C."/>
            <person name="Delgado O."/>
            <person name="Dugan-Rocha S."/>
            <person name="Miner G."/>
            <person name="Morgan M."/>
            <person name="Hawes A."/>
            <person name="Gill R."/>
            <person name="Holt R.A."/>
            <person name="Adams M.D."/>
            <person name="Amanatides P.G."/>
            <person name="Baden-Tillson H."/>
            <person name="Barnstead M."/>
            <person name="Chin S."/>
            <person name="Evans C.A."/>
            <person name="Ferriera S."/>
            <person name="Fosler C."/>
            <person name="Glodek A."/>
            <person name="Gu Z."/>
            <person name="Jennings D."/>
            <person name="Kraft C.L."/>
            <person name="Nguyen T."/>
            <person name="Pfannkoch C.M."/>
            <person name="Sitter C."/>
            <person name="Sutton G.G."/>
            <person name="Venter J.C."/>
            <person name="Woodage T."/>
            <person name="Smith D."/>
            <person name="Lee H.-M."/>
            <person name="Gustafson E."/>
            <person name="Cahill P."/>
            <person name="Kana A."/>
            <person name="Doucette-Stamm L."/>
            <person name="Weinstock K."/>
            <person name="Fechtel K."/>
            <person name="Weiss R.B."/>
            <person name="Dunn D.M."/>
            <person name="Green E.D."/>
            <person name="Blakesley R.W."/>
            <person name="Bouffard G.G."/>
            <person name="De Jong P.J."/>
            <person name="Osoegawa K."/>
            <person name="Zhu B."/>
            <person name="Marra M."/>
            <person name="Schein J."/>
            <person name="Bosdet I."/>
            <person name="Fjell C."/>
            <person name="Jones S."/>
            <person name="Krzywinski M."/>
            <person name="Mathewson C."/>
            <person name="Siddiqui A."/>
            <person name="Wye N."/>
            <person name="McPherson J."/>
            <person name="Zhao S."/>
            <person name="Fraser C.M."/>
            <person name="Shetty J."/>
            <person name="Shatsman S."/>
            <person name="Geer K."/>
            <person name="Chen Y."/>
            <person name="Abramzon S."/>
            <person name="Nierman W.C."/>
            <person name="Havlak P.H."/>
            <person name="Chen R."/>
            <person name="Durbin K.J."/>
            <person name="Egan A."/>
            <person name="Ren Y."/>
            <person name="Song X.-Z."/>
            <person name="Li B."/>
            <person name="Liu Y."/>
            <person name="Qin X."/>
            <person name="Cawley S."/>
            <person name="Cooney A.J."/>
            <person name="D'Souza L.M."/>
            <person name="Martin K."/>
            <person name="Wu J.Q."/>
            <person name="Gonzalez-Garay M.L."/>
            <person name="Jackson A.R."/>
            <person name="Kalafus K.J."/>
            <person name="McLeod M.P."/>
            <person name="Milosavljevic A."/>
            <person name="Virk D."/>
            <person name="Volkov A."/>
            <person name="Wheeler D.A."/>
            <person name="Zhang Z."/>
            <person name="Bailey J.A."/>
            <person name="Eichler E.E."/>
            <person name="Tuzun E."/>
            <person name="Birney E."/>
            <person name="Mongin E."/>
            <person name="Ureta-Vidal A."/>
            <person name="Woodwark C."/>
            <person name="Zdobnov E."/>
            <person name="Bork P."/>
            <person name="Suyama M."/>
            <person name="Torrents D."/>
            <person name="Alexandersson M."/>
            <person name="Trask B.J."/>
            <person name="Young J.M."/>
            <person name="Huang H."/>
            <person name="Wang H."/>
            <person name="Xing H."/>
            <person name="Daniels S."/>
            <person name="Gietzen D."/>
            <person name="Schmidt J."/>
            <person name="Stevens K."/>
            <person name="Vitt U."/>
            <person name="Wingrove J."/>
            <person name="Camara F."/>
            <person name="Mar Alba M."/>
            <person name="Abril J.F."/>
            <person name="Guigo R."/>
            <person name="Smit A."/>
            <person name="Dubchak I."/>
            <person name="Rubin E.M."/>
            <person name="Couronne O."/>
            <person name="Poliakov A."/>
            <person name="Huebner N."/>
            <person name="Ganten D."/>
            <person name="Goesele C."/>
            <person name="Hummel O."/>
            <person name="Kreitler T."/>
            <person name="Lee Y.-A."/>
            <person name="Monti J."/>
            <person name="Schulz H."/>
            <person name="Zimdahl H."/>
            <person name="Himmelbauer H."/>
            <person name="Lehrach H."/>
            <person name="Jacob H.J."/>
            <person name="Bromberg S."/>
            <person name="Gullings-Handley J."/>
            <person name="Jensen-Seaman M.I."/>
            <person name="Kwitek A.E."/>
            <person name="Lazar J."/>
            <person name="Pasko D."/>
            <person name="Tonellato P.J."/>
            <person name="Twigger S."/>
            <person name="Ponting C.P."/>
            <person name="Duarte J.M."/>
            <person name="Rice S."/>
            <person name="Goodstadt L."/>
            <person name="Beatson S.A."/>
            <person name="Emes R.D."/>
            <person name="Winter E.E."/>
            <person name="Webber C."/>
            <person name="Brandt P."/>
            <person name="Nyakatura G."/>
            <person name="Adetobi M."/>
            <person name="Chiaromonte F."/>
            <person name="Elnitski L."/>
            <person name="Eswara P."/>
            <person name="Hardison R.C."/>
            <person name="Hou M."/>
            <person name="Kolbe D."/>
            <person name="Makova K."/>
            <person name="Miller W."/>
            <person name="Nekrutenko A."/>
            <person name="Riemer C."/>
            <person name="Schwartz S."/>
            <person name="Taylor J."/>
            <person name="Yang S."/>
            <person name="Zhang Y."/>
            <person name="Lindpaintner K."/>
            <person name="Andrews T.D."/>
            <person name="Caccamo M."/>
            <person name="Clamp M."/>
            <person name="Clarke L."/>
            <person name="Curwen V."/>
            <person name="Durbin R.M."/>
            <person name="Eyras E."/>
            <person name="Searle S.M."/>
            <person name="Cooper G.M."/>
            <person name="Batzoglou S."/>
            <person name="Brudno M."/>
            <person name="Sidow A."/>
            <person name="Stone E.A."/>
            <person name="Payseur B.A."/>
            <person name="Bourque G."/>
            <person name="Lopez-Otin C."/>
            <person name="Puente X.S."/>
            <person name="Chakrabarti K."/>
            <person name="Chatterji S."/>
            <person name="Dewey C."/>
            <person name="Pachter L."/>
            <person name="Bray N."/>
            <person name="Yap V.B."/>
            <person name="Caspi A."/>
            <person name="Tesler G."/>
            <person name="Pevzner P.A."/>
            <person name="Haussler D."/>
            <person name="Roskin K.M."/>
            <person name="Baertsch R."/>
            <person name="Clawson H."/>
            <person name="Furey T.S."/>
            <person name="Hinrichs A.S."/>
            <person name="Karolchik D."/>
            <person name="Kent W.J."/>
            <person name="Rosenbloom K.R."/>
            <person name="Trumbower H."/>
            <person name="Weirauch M."/>
            <person name="Cooper D.N."/>
            <person name="Stenson P.D."/>
            <person name="Ma B."/>
            <person name="Brent M."/>
            <person name="Arumugam M."/>
            <person name="Shteynberg D."/>
            <person name="Copley R.R."/>
            <person name="Taylor M.S."/>
            <person name="Riethman H."/>
            <person name="Mudunuri U."/>
            <person name="Peterson J."/>
            <person name="Guyer M."/>
            <person name="Felsenfeld A."/>
            <person name="Old S."/>
            <person name="Mockrin S."/>
            <person name="Collins F.S."/>
        </authorList>
    </citation>
    <scope>NUCLEOTIDE SEQUENCE [LARGE SCALE GENOMIC DNA]</scope>
    <source>
        <strain>Brown Norway</strain>
    </source>
</reference>
<dbReference type="EMBL" id="AF165892">
    <property type="protein sequence ID" value="AAD44358.1"/>
    <property type="status" value="ALT_INIT"/>
    <property type="molecule type" value="mRNA"/>
</dbReference>
<dbReference type="EMBL" id="AABR03055594">
    <property type="status" value="NOT_ANNOTATED_CDS"/>
    <property type="molecule type" value="Genomic_DNA"/>
</dbReference>
<dbReference type="RefSeq" id="NP_001386320.1">
    <molecule id="Q9WV25-1"/>
    <property type="nucleotide sequence ID" value="NM_001399391.1"/>
</dbReference>
<dbReference type="RefSeq" id="NP_001386321.1">
    <molecule id="Q9WV25-2"/>
    <property type="nucleotide sequence ID" value="NM_001399392.1"/>
</dbReference>
<dbReference type="RefSeq" id="XP_006241956.2">
    <property type="nucleotide sequence ID" value="XM_006241894.3"/>
</dbReference>
<dbReference type="BMRB" id="Q9WV25"/>
<dbReference type="SMR" id="Q9WV25"/>
<dbReference type="FunCoup" id="Q9WV25">
    <property type="interactions" value="4272"/>
</dbReference>
<dbReference type="IntAct" id="Q9WV25">
    <property type="interactions" value="3"/>
</dbReference>
<dbReference type="MINT" id="Q9WV25"/>
<dbReference type="STRING" id="10116.ENSRNOP00000053317"/>
<dbReference type="GlyGen" id="Q9WV25">
    <property type="glycosylation" value="4 sites, 1 O-linked glycan (1 site)"/>
</dbReference>
<dbReference type="iPTMnet" id="Q9WV25"/>
<dbReference type="PhosphoSitePlus" id="Q9WV25"/>
<dbReference type="jPOST" id="Q9WV25"/>
<dbReference type="PaxDb" id="10116-ENSRNOP00000053317"/>
<dbReference type="GeneID" id="84401"/>
<dbReference type="UCSC" id="RGD:621674">
    <molecule id="Q9WV25-1"/>
    <property type="organism name" value="rat"/>
</dbReference>
<dbReference type="AGR" id="RGD:621674"/>
<dbReference type="RGD" id="621674">
    <property type="gene designation" value="Puf60"/>
</dbReference>
<dbReference type="VEuPathDB" id="HostDB:ENSRNOG00000009960"/>
<dbReference type="eggNOG" id="KOG0124">
    <property type="taxonomic scope" value="Eukaryota"/>
</dbReference>
<dbReference type="HOGENOM" id="CLU_020551_3_1_1"/>
<dbReference type="InParanoid" id="Q9WV25"/>
<dbReference type="OrthoDB" id="20943at2759"/>
<dbReference type="PhylomeDB" id="Q9WV25"/>
<dbReference type="TreeFam" id="TF313987"/>
<dbReference type="Reactome" id="R-RNO-72163">
    <property type="pathway name" value="mRNA Splicing - Major Pathway"/>
</dbReference>
<dbReference type="PRO" id="PR:Q9WV25"/>
<dbReference type="Proteomes" id="UP000002494">
    <property type="component" value="Chromosome 7"/>
</dbReference>
<dbReference type="Bgee" id="ENSRNOG00000009960">
    <property type="expression patterns" value="Expressed in thymus and 19 other cell types or tissues"/>
</dbReference>
<dbReference type="ExpressionAtlas" id="Q9WV25">
    <property type="expression patterns" value="baseline and differential"/>
</dbReference>
<dbReference type="GO" id="GO:0005634">
    <property type="term" value="C:nucleus"/>
    <property type="evidence" value="ECO:0007669"/>
    <property type="project" value="UniProtKB-SubCell"/>
</dbReference>
<dbReference type="GO" id="GO:1990904">
    <property type="term" value="C:ribonucleoprotein complex"/>
    <property type="evidence" value="ECO:0007669"/>
    <property type="project" value="UniProtKB-KW"/>
</dbReference>
<dbReference type="GO" id="GO:0003677">
    <property type="term" value="F:DNA binding"/>
    <property type="evidence" value="ECO:0007669"/>
    <property type="project" value="UniProtKB-KW"/>
</dbReference>
<dbReference type="GO" id="GO:0042802">
    <property type="term" value="F:identical protein binding"/>
    <property type="evidence" value="ECO:0000266"/>
    <property type="project" value="RGD"/>
</dbReference>
<dbReference type="GO" id="GO:0003723">
    <property type="term" value="F:RNA binding"/>
    <property type="evidence" value="ECO:0007669"/>
    <property type="project" value="UniProtKB-KW"/>
</dbReference>
<dbReference type="GO" id="GO:0000380">
    <property type="term" value="P:alternative mRNA splicing, via spliceosome"/>
    <property type="evidence" value="ECO:0000318"/>
    <property type="project" value="GO_Central"/>
</dbReference>
<dbReference type="GO" id="GO:0006915">
    <property type="term" value="P:apoptotic process"/>
    <property type="evidence" value="ECO:0007669"/>
    <property type="project" value="UniProtKB-KW"/>
</dbReference>
<dbReference type="GO" id="GO:0006376">
    <property type="term" value="P:mRNA splice site recognition"/>
    <property type="evidence" value="ECO:0000318"/>
    <property type="project" value="GO_Central"/>
</dbReference>
<dbReference type="GO" id="GO:0000381">
    <property type="term" value="P:regulation of alternative mRNA splicing, via spliceosome"/>
    <property type="evidence" value="ECO:0000318"/>
    <property type="project" value="GO_Central"/>
</dbReference>
<dbReference type="CDD" id="cd12370">
    <property type="entry name" value="RRM1_PUF60"/>
    <property type="match status" value="1"/>
</dbReference>
<dbReference type="CDD" id="cd12371">
    <property type="entry name" value="RRM2_PUF60"/>
    <property type="match status" value="1"/>
</dbReference>
<dbReference type="CDD" id="cd12648">
    <property type="entry name" value="RRM3_UHM_PUF60"/>
    <property type="match status" value="1"/>
</dbReference>
<dbReference type="FunFam" id="3.30.70.330:FF:000133">
    <property type="entry name" value="poly(U)-binding-splicing factor PUF60 isoform X1"/>
    <property type="match status" value="1"/>
</dbReference>
<dbReference type="FunFam" id="3.30.70.330:FF:000136">
    <property type="entry name" value="poly(U)-binding-splicing factor PUF60 isoform X1"/>
    <property type="match status" value="1"/>
</dbReference>
<dbReference type="FunFam" id="3.30.70.330:FF:000152">
    <property type="entry name" value="poly(U)-binding-splicing factor PUF60 isoform X1"/>
    <property type="match status" value="1"/>
</dbReference>
<dbReference type="Gene3D" id="3.30.70.330">
    <property type="match status" value="3"/>
</dbReference>
<dbReference type="InterPro" id="IPR012677">
    <property type="entry name" value="Nucleotide-bd_a/b_plait_sf"/>
</dbReference>
<dbReference type="InterPro" id="IPR006532">
    <property type="entry name" value="PUF60-like"/>
</dbReference>
<dbReference type="InterPro" id="IPR051974">
    <property type="entry name" value="PUF60_regulator"/>
</dbReference>
<dbReference type="InterPro" id="IPR034209">
    <property type="entry name" value="PUF60_RRM1"/>
</dbReference>
<dbReference type="InterPro" id="IPR034211">
    <property type="entry name" value="PUF60_RRM2"/>
</dbReference>
<dbReference type="InterPro" id="IPR034212">
    <property type="entry name" value="PUF60_RRM3"/>
</dbReference>
<dbReference type="InterPro" id="IPR035979">
    <property type="entry name" value="RBD_domain_sf"/>
</dbReference>
<dbReference type="InterPro" id="IPR000504">
    <property type="entry name" value="RRM_dom"/>
</dbReference>
<dbReference type="InterPro" id="IPR003954">
    <property type="entry name" value="RRM_dom_euk"/>
</dbReference>
<dbReference type="NCBIfam" id="TIGR01645">
    <property type="entry name" value="half-pint"/>
    <property type="match status" value="1"/>
</dbReference>
<dbReference type="PANTHER" id="PTHR47330:SF1">
    <property type="entry name" value="POLY(U)-BINDING-SPLICING FACTOR PUF60"/>
    <property type="match status" value="1"/>
</dbReference>
<dbReference type="PANTHER" id="PTHR47330">
    <property type="entry name" value="POLY(U)-BINDING-SPLICING FACTOR PUF60-B-RELATED"/>
    <property type="match status" value="1"/>
</dbReference>
<dbReference type="Pfam" id="PF00076">
    <property type="entry name" value="RRM_1"/>
    <property type="match status" value="2"/>
</dbReference>
<dbReference type="SMART" id="SM00360">
    <property type="entry name" value="RRM"/>
    <property type="match status" value="3"/>
</dbReference>
<dbReference type="SMART" id="SM00361">
    <property type="entry name" value="RRM_1"/>
    <property type="match status" value="2"/>
</dbReference>
<dbReference type="SUPFAM" id="SSF54928">
    <property type="entry name" value="RNA-binding domain, RBD"/>
    <property type="match status" value="2"/>
</dbReference>
<dbReference type="PROSITE" id="PS50102">
    <property type="entry name" value="RRM"/>
    <property type="match status" value="3"/>
</dbReference>
<comment type="function">
    <text evidence="1">DNA- and RNA-binding protein, involved in several nuclear processes such as pre-mRNA splicing, apoptosis and transcription regulation. In association with FUBP1 regulates MYC transcription at the P2 promoter through the core-TFIIH basal transcription factor. Acts as a transcriptional repressor through the core-TFIIH basal transcription factor. Represses FUBP1-induced transcriptional activation but not basal transcription. Decreases ERCC3 helicase activity. Is also involved in pre-mRNA splicing. Promotes splicing of an intron with weak 3'-splice site and pyrimidine tract in a cooperative manner with U2AF2. Involved in apoptosis induction when overexpressed in HeLa cells. Modulates alternative splicing of several mRNAs. Binds to relaxed DNA of active promoter regions. Binds to the pyrimidine tract and 3'-splice site regions of pre-mRNA; binding is enhanced in presence of U2AF2. Binds to Y5 RNA in association with RO60. Binds to poly(U) RNA (By similarity).</text>
</comment>
<comment type="subunit">
    <text evidence="3">Homodimer. Associates with the spliceosome. Found in a complex with RO60 and Y5 RNA. Found in a complex with FUBP1 and far upstream element (FUSE) DNA segment. Interacts directly with ERCC3. Interacts with CDK7 and GTF2H1. Interacts with SRSF11/P54. Interacts with ARGLU1; interaction may be involved in ARGLU1-mediated modulation of alternative splicing.</text>
</comment>
<comment type="subcellular location">
    <subcellularLocation>
        <location evidence="3">Nucleus</location>
    </subcellularLocation>
    <text evidence="3">Colocalizes partially with RO60.</text>
</comment>
<comment type="alternative products">
    <event type="alternative splicing"/>
    <isoform>
        <id>Q9WV25-1</id>
        <name>1</name>
        <sequence type="displayed"/>
    </isoform>
    <isoform>
        <id>Q9WV25-2</id>
        <name>2</name>
        <sequence type="described" ref="VSP_027724"/>
    </isoform>
</comment>
<comment type="domain">
    <text>The third RNA recognition motif, called PUMP domain, is atypical and may rather mediate homodimerization and/or protein-protein interactions.</text>
</comment>
<comment type="similarity">
    <text evidence="7">Belongs to the RRM half pint family.</text>
</comment>
<comment type="sequence caution" evidence="7">
    <conflict type="erroneous initiation">
        <sequence resource="EMBL-CDS" id="AAD44358"/>
    </conflict>
</comment>
<gene>
    <name evidence="8" type="primary">Puf60</name>
    <name evidence="6" type="synonym">Siahbp1</name>
</gene>
<organism>
    <name type="scientific">Rattus norvegicus</name>
    <name type="common">Rat</name>
    <dbReference type="NCBI Taxonomy" id="10116"/>
    <lineage>
        <taxon>Eukaryota</taxon>
        <taxon>Metazoa</taxon>
        <taxon>Chordata</taxon>
        <taxon>Craniata</taxon>
        <taxon>Vertebrata</taxon>
        <taxon>Euteleostomi</taxon>
        <taxon>Mammalia</taxon>
        <taxon>Eutheria</taxon>
        <taxon>Euarchontoglires</taxon>
        <taxon>Glires</taxon>
        <taxon>Rodentia</taxon>
        <taxon>Myomorpha</taxon>
        <taxon>Muroidea</taxon>
        <taxon>Muridae</taxon>
        <taxon>Murinae</taxon>
        <taxon>Rattus</taxon>
    </lineage>
</organism>
<proteinExistence type="evidence at transcript level"/>
<keyword id="KW-0007">Acetylation</keyword>
<keyword id="KW-0025">Alternative splicing</keyword>
<keyword id="KW-0053">Apoptosis</keyword>
<keyword id="KW-0238">DNA-binding</keyword>
<keyword id="KW-1017">Isopeptide bond</keyword>
<keyword id="KW-0507">mRNA processing</keyword>
<keyword id="KW-0508">mRNA splicing</keyword>
<keyword id="KW-0539">Nucleus</keyword>
<keyword id="KW-0597">Phosphoprotein</keyword>
<keyword id="KW-1185">Reference proteome</keyword>
<keyword id="KW-0677">Repeat</keyword>
<keyword id="KW-0678">Repressor</keyword>
<keyword id="KW-0687">Ribonucleoprotein</keyword>
<keyword id="KW-0694">RNA-binding</keyword>
<keyword id="KW-0804">Transcription</keyword>
<keyword id="KW-0805">Transcription regulation</keyword>
<keyword id="KW-0832">Ubl conjugation</keyword>
<feature type="chain" id="PRO_0000299522" description="Poly(U)-binding-splicing factor PUF60">
    <location>
        <begin position="1"/>
        <end position="564"/>
    </location>
</feature>
<feature type="domain" description="RRM 1" evidence="4">
    <location>
        <begin position="134"/>
        <end position="212"/>
    </location>
</feature>
<feature type="domain" description="RRM 2" evidence="4">
    <location>
        <begin position="231"/>
        <end position="309"/>
    </location>
</feature>
<feature type="domain" description="RRM 3; atypical" evidence="4">
    <location>
        <begin position="467"/>
        <end position="554"/>
    </location>
</feature>
<feature type="region of interest" description="Inhibits homodimerization" evidence="1">
    <location>
        <begin position="1"/>
        <end position="521"/>
    </location>
</feature>
<feature type="region of interest" description="Disordered" evidence="5">
    <location>
        <begin position="37"/>
        <end position="61"/>
    </location>
</feature>
<feature type="region of interest" description="Inhibits transcriptional repression, interaction with ERCC3 and apoptosis induction" evidence="1">
    <location>
        <begin position="82"/>
        <end position="564"/>
    </location>
</feature>
<feature type="region of interest" description="Disordered" evidence="5">
    <location>
        <begin position="421"/>
        <end position="442"/>
    </location>
</feature>
<feature type="compositionally biased region" description="Basic and acidic residues" evidence="5">
    <location>
        <begin position="432"/>
        <end position="442"/>
    </location>
</feature>
<feature type="modified residue" description="Phosphothreonine" evidence="3">
    <location>
        <position position="65"/>
    </location>
</feature>
<feature type="modified residue" description="Phosphoserine" evidence="3">
    <location>
        <position position="117"/>
    </location>
</feature>
<feature type="modified residue" description="Phosphoserine" evidence="2">
    <location>
        <position position="249"/>
    </location>
</feature>
<feature type="modified residue" description="N6-acetyllysine" evidence="3">
    <location>
        <position position="256"/>
    </location>
</feature>
<feature type="modified residue" description="Phosphothreonine" evidence="3">
    <location>
        <position position="319"/>
    </location>
</feature>
<feature type="modified residue" description="N6-acetyllysine" evidence="3">
    <location>
        <position position="459"/>
    </location>
</feature>
<feature type="cross-link" description="Glycyl lysine isopeptide (Lys-Gly) (interchain with G-Cter in SUMO2)" evidence="3">
    <location>
        <position position="48"/>
    </location>
</feature>
<feature type="cross-link" description="Glycyl lysine isopeptide (Lys-Gly) (interchain with G-Cter in SUMO2)" evidence="3">
    <location>
        <position position="85"/>
    </location>
</feature>
<feature type="cross-link" description="Glycyl lysine isopeptide (Lys-Gly) (interchain with G-Cter in SUMO2)" evidence="3">
    <location>
        <position position="424"/>
    </location>
</feature>
<feature type="cross-link" description="Glycyl lysine isopeptide (Lys-Gly) (interchain with G-Cter in SUMO2)" evidence="3">
    <location>
        <position position="463"/>
    </location>
</feature>
<feature type="splice variant" id="VSP_027724" description="In isoform 2." evidence="6">
    <location>
        <begin position="105"/>
        <end position="121"/>
    </location>
</feature>